<keyword id="KW-0106">Calcium</keyword>
<keyword id="KW-1015">Disulfide bond</keyword>
<keyword id="KW-0378">Hydrolase</keyword>
<keyword id="KW-0442">Lipid degradation</keyword>
<keyword id="KW-0443">Lipid metabolism</keyword>
<keyword id="KW-0479">Metal-binding</keyword>
<keyword id="KW-0964">Secreted</keyword>
<keyword id="KW-0732">Signal</keyword>
<evidence type="ECO:0000250" key="1"/>
<evidence type="ECO:0000255" key="2"/>
<evidence type="ECO:0000255" key="3">
    <source>
        <dbReference type="PROSITE-ProRule" id="PRU10035"/>
    </source>
</evidence>
<evidence type="ECO:0000255" key="4">
    <source>
        <dbReference type="PROSITE-ProRule" id="PRU10036"/>
    </source>
</evidence>
<evidence type="ECO:0000305" key="5"/>
<proteinExistence type="evidence at transcript level"/>
<feature type="signal peptide" evidence="2">
    <location>
        <begin position="1"/>
        <end position="21"/>
    </location>
</feature>
<feature type="propeptide" id="PRO_0000022912" evidence="1">
    <location>
        <begin position="22"/>
        <end position="27"/>
    </location>
</feature>
<feature type="chain" id="PRO_0000022913" description="Phospholipase A2 pkP2">
    <location>
        <begin position="28"/>
        <end position="152"/>
    </location>
</feature>
<feature type="active site" evidence="1">
    <location>
        <position position="75"/>
    </location>
</feature>
<feature type="active site" evidence="1">
    <location>
        <position position="126"/>
    </location>
</feature>
<feature type="binding site" evidence="1">
    <location>
        <position position="55"/>
    </location>
    <ligand>
        <name>Ca(2+)</name>
        <dbReference type="ChEBI" id="CHEBI:29108"/>
    </ligand>
</feature>
<feature type="binding site" evidence="1">
    <location>
        <position position="57"/>
    </location>
    <ligand>
        <name>Ca(2+)</name>
        <dbReference type="ChEBI" id="CHEBI:29108"/>
    </ligand>
</feature>
<feature type="binding site" evidence="1">
    <location>
        <position position="59"/>
    </location>
    <ligand>
        <name>Ca(2+)</name>
        <dbReference type="ChEBI" id="CHEBI:29108"/>
    </ligand>
</feature>
<feature type="binding site" evidence="1">
    <location>
        <position position="76"/>
    </location>
    <ligand>
        <name>Ca(2+)</name>
        <dbReference type="ChEBI" id="CHEBI:29108"/>
    </ligand>
</feature>
<feature type="disulfide bond" evidence="1">
    <location>
        <begin position="38"/>
        <end position="104"/>
    </location>
</feature>
<feature type="disulfide bond" evidence="1">
    <location>
        <begin position="54"/>
        <end position="151"/>
    </location>
</feature>
<feature type="disulfide bond" evidence="1">
    <location>
        <begin position="56"/>
        <end position="72"/>
    </location>
</feature>
<feature type="disulfide bond" evidence="1">
    <location>
        <begin position="71"/>
        <end position="132"/>
    </location>
</feature>
<feature type="disulfide bond" evidence="1">
    <location>
        <begin position="78"/>
        <end position="125"/>
    </location>
</feature>
<feature type="disulfide bond" evidence="1">
    <location>
        <begin position="88"/>
        <end position="118"/>
    </location>
</feature>
<feature type="disulfide bond" evidence="1">
    <location>
        <begin position="111"/>
        <end position="123"/>
    </location>
</feature>
<dbReference type="EC" id="3.1.1.4"/>
<dbReference type="EMBL" id="AB078347">
    <property type="protein sequence ID" value="BAC03246.1"/>
    <property type="molecule type" value="mRNA"/>
</dbReference>
<dbReference type="SMR" id="Q8JFG2"/>
<dbReference type="GO" id="GO:0005576">
    <property type="term" value="C:extracellular region"/>
    <property type="evidence" value="ECO:0007669"/>
    <property type="project" value="UniProtKB-SubCell"/>
</dbReference>
<dbReference type="GO" id="GO:0005509">
    <property type="term" value="F:calcium ion binding"/>
    <property type="evidence" value="ECO:0007669"/>
    <property type="project" value="InterPro"/>
</dbReference>
<dbReference type="GO" id="GO:0047498">
    <property type="term" value="F:calcium-dependent phospholipase A2 activity"/>
    <property type="evidence" value="ECO:0007669"/>
    <property type="project" value="TreeGrafter"/>
</dbReference>
<dbReference type="GO" id="GO:0005543">
    <property type="term" value="F:phospholipid binding"/>
    <property type="evidence" value="ECO:0007669"/>
    <property type="project" value="TreeGrafter"/>
</dbReference>
<dbReference type="GO" id="GO:0005102">
    <property type="term" value="F:signaling receptor binding"/>
    <property type="evidence" value="ECO:0007669"/>
    <property type="project" value="TreeGrafter"/>
</dbReference>
<dbReference type="GO" id="GO:0050482">
    <property type="term" value="P:arachidonate secretion"/>
    <property type="evidence" value="ECO:0007669"/>
    <property type="project" value="InterPro"/>
</dbReference>
<dbReference type="GO" id="GO:0006633">
    <property type="term" value="P:fatty acid biosynthetic process"/>
    <property type="evidence" value="ECO:0007669"/>
    <property type="project" value="TreeGrafter"/>
</dbReference>
<dbReference type="GO" id="GO:0016042">
    <property type="term" value="P:lipid catabolic process"/>
    <property type="evidence" value="ECO:0007669"/>
    <property type="project" value="UniProtKB-KW"/>
</dbReference>
<dbReference type="GO" id="GO:0006644">
    <property type="term" value="P:phospholipid metabolic process"/>
    <property type="evidence" value="ECO:0007669"/>
    <property type="project" value="InterPro"/>
</dbReference>
<dbReference type="GO" id="GO:0048146">
    <property type="term" value="P:positive regulation of fibroblast proliferation"/>
    <property type="evidence" value="ECO:0007669"/>
    <property type="project" value="TreeGrafter"/>
</dbReference>
<dbReference type="CDD" id="cd00125">
    <property type="entry name" value="PLA2c"/>
    <property type="match status" value="1"/>
</dbReference>
<dbReference type="FunFam" id="1.20.90.10:FF:000011">
    <property type="entry name" value="Phospholipase A(2)"/>
    <property type="match status" value="1"/>
</dbReference>
<dbReference type="Gene3D" id="1.20.90.10">
    <property type="entry name" value="Phospholipase A2 domain"/>
    <property type="match status" value="1"/>
</dbReference>
<dbReference type="InterPro" id="IPR001211">
    <property type="entry name" value="PLipase_A2"/>
</dbReference>
<dbReference type="InterPro" id="IPR033112">
    <property type="entry name" value="PLipase_A2_Asp_AS"/>
</dbReference>
<dbReference type="InterPro" id="IPR016090">
    <property type="entry name" value="PLipase_A2_dom"/>
</dbReference>
<dbReference type="InterPro" id="IPR036444">
    <property type="entry name" value="PLipase_A2_dom_sf"/>
</dbReference>
<dbReference type="InterPro" id="IPR033113">
    <property type="entry name" value="PLipase_A2_His_AS"/>
</dbReference>
<dbReference type="PANTHER" id="PTHR11716:SF94">
    <property type="entry name" value="PHOSPHOLIPASE A2"/>
    <property type="match status" value="1"/>
</dbReference>
<dbReference type="PANTHER" id="PTHR11716">
    <property type="entry name" value="PHOSPHOLIPASE A2 FAMILY MEMBER"/>
    <property type="match status" value="1"/>
</dbReference>
<dbReference type="Pfam" id="PF00068">
    <property type="entry name" value="Phospholip_A2_1"/>
    <property type="match status" value="1"/>
</dbReference>
<dbReference type="PRINTS" id="PR00389">
    <property type="entry name" value="PHPHLIPASEA2"/>
</dbReference>
<dbReference type="SMART" id="SM00085">
    <property type="entry name" value="PA2c"/>
    <property type="match status" value="1"/>
</dbReference>
<dbReference type="SUPFAM" id="SSF48619">
    <property type="entry name" value="Phospholipase A2, PLA2"/>
    <property type="match status" value="1"/>
</dbReference>
<dbReference type="PROSITE" id="PS00119">
    <property type="entry name" value="PA2_ASP"/>
    <property type="match status" value="1"/>
</dbReference>
<dbReference type="PROSITE" id="PS00118">
    <property type="entry name" value="PA2_HIS"/>
    <property type="match status" value="1"/>
</dbReference>
<accession>Q8JFG2</accession>
<protein>
    <recommendedName>
        <fullName>Phospholipase A2 pkP2</fullName>
        <ecNumber>3.1.1.4</ecNumber>
    </recommendedName>
    <alternativeName>
        <fullName>Phosphatidylcholine 2-acylhydrolase</fullName>
    </alternativeName>
</protein>
<name>PA2H_LATSE</name>
<reference key="1">
    <citation type="journal article" date="2002" name="Gene">
        <title>Nucleotide sequence of phospholipase A2 gene expressed in snake pancreas reveals the molecular evolution of toxic phospholipase A2 genes.</title>
        <authorList>
            <person name="Fujimi T.J."/>
            <person name="Kariya Y."/>
            <person name="Tsuchiya T."/>
            <person name="Tamiya T."/>
        </authorList>
    </citation>
    <scope>NUCLEOTIDE SEQUENCE [MRNA]</scope>
    <source>
        <tissue>Pancreas</tissue>
    </source>
</reference>
<organism>
    <name type="scientific">Laticauda semifasciata</name>
    <name type="common">Black-banded sea krait</name>
    <name type="synonym">Pseudolaticauda semifasciata</name>
    <dbReference type="NCBI Taxonomy" id="8631"/>
    <lineage>
        <taxon>Eukaryota</taxon>
        <taxon>Metazoa</taxon>
        <taxon>Chordata</taxon>
        <taxon>Craniata</taxon>
        <taxon>Vertebrata</taxon>
        <taxon>Euteleostomi</taxon>
        <taxon>Lepidosauria</taxon>
        <taxon>Squamata</taxon>
        <taxon>Bifurcata</taxon>
        <taxon>Unidentata</taxon>
        <taxon>Episquamata</taxon>
        <taxon>Toxicofera</taxon>
        <taxon>Serpentes</taxon>
        <taxon>Colubroidea</taxon>
        <taxon>Elapidae</taxon>
        <taxon>Laticaudinae</taxon>
        <taxon>Laticauda</taxon>
    </lineage>
</organism>
<comment type="function">
    <text evidence="1">PA2 catalyzes the calcium-dependent hydrolysis of the 2-acyl groups in 3-sn-phosphoglycerides.</text>
</comment>
<comment type="catalytic activity">
    <reaction evidence="3 4">
        <text>a 1,2-diacyl-sn-glycero-3-phosphocholine + H2O = a 1-acyl-sn-glycero-3-phosphocholine + a fatty acid + H(+)</text>
        <dbReference type="Rhea" id="RHEA:15801"/>
        <dbReference type="ChEBI" id="CHEBI:15377"/>
        <dbReference type="ChEBI" id="CHEBI:15378"/>
        <dbReference type="ChEBI" id="CHEBI:28868"/>
        <dbReference type="ChEBI" id="CHEBI:57643"/>
        <dbReference type="ChEBI" id="CHEBI:58168"/>
        <dbReference type="EC" id="3.1.1.4"/>
    </reaction>
</comment>
<comment type="cofactor">
    <cofactor evidence="1">
        <name>Ca(2+)</name>
        <dbReference type="ChEBI" id="CHEBI:29108"/>
    </cofactor>
    <text evidence="1">Binds 1 Ca(2+) ion per subunit.</text>
</comment>
<comment type="subcellular location">
    <subcellularLocation>
        <location evidence="1">Secreted</location>
    </subcellularLocation>
</comment>
<comment type="similarity">
    <text evidence="5">Belongs to the phospholipase A2 family. Group I subfamily.</text>
</comment>
<sequence length="152" mass="16374">MNPAHLLVLLAVCVSLLGASAIPPLPLNLVQFSNMIKCTIPGSRPLLDYADYGCYCGAGGSGTPVDESDRCCQTHDNCYSQAKKHPACKSPLDSPYIKIYSYTCSGGSLTCRDDNDECGAFICNCDRTAAICFAGAPYNKENYNIDTKKHCK</sequence>